<organism>
    <name type="scientific">Vibrio vulnificus (strain CMCP6)</name>
    <dbReference type="NCBI Taxonomy" id="216895"/>
    <lineage>
        <taxon>Bacteria</taxon>
        <taxon>Pseudomonadati</taxon>
        <taxon>Pseudomonadota</taxon>
        <taxon>Gammaproteobacteria</taxon>
        <taxon>Vibrionales</taxon>
        <taxon>Vibrionaceae</taxon>
        <taxon>Vibrio</taxon>
    </lineage>
</organism>
<dbReference type="EC" id="2.1.1.185" evidence="1"/>
<dbReference type="EMBL" id="AE016795">
    <property type="protein sequence ID" value="AAO09760.1"/>
    <property type="molecule type" value="Genomic_DNA"/>
</dbReference>
<dbReference type="RefSeq" id="WP_011079287.1">
    <property type="nucleotide sequence ID" value="NC_004459.3"/>
</dbReference>
<dbReference type="SMR" id="Q8DCT8"/>
<dbReference type="KEGG" id="vvu:VV1_1305"/>
<dbReference type="HOGENOM" id="CLU_021322_0_1_6"/>
<dbReference type="Proteomes" id="UP000002275">
    <property type="component" value="Chromosome 1"/>
</dbReference>
<dbReference type="GO" id="GO:0005829">
    <property type="term" value="C:cytosol"/>
    <property type="evidence" value="ECO:0007669"/>
    <property type="project" value="TreeGrafter"/>
</dbReference>
<dbReference type="GO" id="GO:0003723">
    <property type="term" value="F:RNA binding"/>
    <property type="evidence" value="ECO:0007669"/>
    <property type="project" value="InterPro"/>
</dbReference>
<dbReference type="GO" id="GO:0070039">
    <property type="term" value="F:rRNA (guanosine-2'-O-)-methyltransferase activity"/>
    <property type="evidence" value="ECO:0007669"/>
    <property type="project" value="UniProtKB-UniRule"/>
</dbReference>
<dbReference type="CDD" id="cd18103">
    <property type="entry name" value="SpoU-like_RlmB"/>
    <property type="match status" value="1"/>
</dbReference>
<dbReference type="FunFam" id="3.40.1280.10:FF:000005">
    <property type="entry name" value="23S rRNA (guanosine-2'-O-)-methyltransferase RlmB"/>
    <property type="match status" value="1"/>
</dbReference>
<dbReference type="Gene3D" id="3.30.1330.30">
    <property type="match status" value="1"/>
</dbReference>
<dbReference type="Gene3D" id="3.40.1280.10">
    <property type="match status" value="1"/>
</dbReference>
<dbReference type="HAMAP" id="MF_01887">
    <property type="entry name" value="23SrRNA_methyltr_B"/>
    <property type="match status" value="1"/>
</dbReference>
<dbReference type="InterPro" id="IPR024915">
    <property type="entry name" value="23S_rRNA_MeTrfase_RlmB"/>
</dbReference>
<dbReference type="InterPro" id="IPR029028">
    <property type="entry name" value="Alpha/beta_knot_MTases"/>
</dbReference>
<dbReference type="InterPro" id="IPR029064">
    <property type="entry name" value="Ribosomal_eL30-like_sf"/>
</dbReference>
<dbReference type="InterPro" id="IPR004441">
    <property type="entry name" value="rRNA_MeTrfase_TrmH"/>
</dbReference>
<dbReference type="InterPro" id="IPR001537">
    <property type="entry name" value="SpoU_MeTrfase"/>
</dbReference>
<dbReference type="InterPro" id="IPR013123">
    <property type="entry name" value="SpoU_subst-bd"/>
</dbReference>
<dbReference type="InterPro" id="IPR029026">
    <property type="entry name" value="tRNA_m1G_MTases_N"/>
</dbReference>
<dbReference type="NCBIfam" id="NF008386">
    <property type="entry name" value="PRK11181.1"/>
    <property type="match status" value="1"/>
</dbReference>
<dbReference type="NCBIfam" id="TIGR00186">
    <property type="entry name" value="rRNA_methyl_3"/>
    <property type="match status" value="1"/>
</dbReference>
<dbReference type="PANTHER" id="PTHR46429">
    <property type="entry name" value="23S RRNA (GUANOSINE-2'-O-)-METHYLTRANSFERASE RLMB"/>
    <property type="match status" value="1"/>
</dbReference>
<dbReference type="PANTHER" id="PTHR46429:SF1">
    <property type="entry name" value="23S RRNA (GUANOSINE-2'-O-)-METHYLTRANSFERASE RLMB"/>
    <property type="match status" value="1"/>
</dbReference>
<dbReference type="Pfam" id="PF00588">
    <property type="entry name" value="SpoU_methylase"/>
    <property type="match status" value="1"/>
</dbReference>
<dbReference type="Pfam" id="PF08032">
    <property type="entry name" value="SpoU_sub_bind"/>
    <property type="match status" value="1"/>
</dbReference>
<dbReference type="SMART" id="SM00967">
    <property type="entry name" value="SpoU_sub_bind"/>
    <property type="match status" value="1"/>
</dbReference>
<dbReference type="SUPFAM" id="SSF75217">
    <property type="entry name" value="alpha/beta knot"/>
    <property type="match status" value="1"/>
</dbReference>
<dbReference type="SUPFAM" id="SSF55315">
    <property type="entry name" value="L30e-like"/>
    <property type="match status" value="1"/>
</dbReference>
<sequence>MSNEFIYGIHAVRAVLDKEPERFIEAYVLKGRQDDRLMPILNELQMVGVSLQQMTRKTLDDKAHGANHQGIIARVKPAKQLNENDLDDILAKHASPLLLILDGVTDPHNLGACLRNADAAGVAAVIVPKDKSAPMTATVSKVACGAAETVPLVRVTNLARTMRHLQEQGIWIVGTAGEATHDIYQAKLTGSLAIVMGAEGDGMRRLTRETCDDLIKIPMAGAVSSLNVSVASGICLFEAVRQRLASQ</sequence>
<keyword id="KW-0963">Cytoplasm</keyword>
<keyword id="KW-0489">Methyltransferase</keyword>
<keyword id="KW-0698">rRNA processing</keyword>
<keyword id="KW-0949">S-adenosyl-L-methionine</keyword>
<keyword id="KW-0808">Transferase</keyword>
<accession>Q8DCT8</accession>
<protein>
    <recommendedName>
        <fullName evidence="1">23S rRNA (guanosine-2'-O-)-methyltransferase RlmB</fullName>
        <ecNumber evidence="1">2.1.1.185</ecNumber>
    </recommendedName>
    <alternativeName>
        <fullName evidence="1">23S rRNA (guanosine2251 2'-O)-methyltransferase</fullName>
    </alternativeName>
    <alternativeName>
        <fullName evidence="1">23S rRNA Gm2251 2'-O-methyltransferase</fullName>
    </alternativeName>
</protein>
<feature type="chain" id="PRO_0000159807" description="23S rRNA (guanosine-2'-O-)-methyltransferase RlmB">
    <location>
        <begin position="1"/>
        <end position="247"/>
    </location>
</feature>
<feature type="binding site" evidence="1">
    <location>
        <position position="197"/>
    </location>
    <ligand>
        <name>S-adenosyl-L-methionine</name>
        <dbReference type="ChEBI" id="CHEBI:59789"/>
    </ligand>
</feature>
<feature type="binding site" evidence="1">
    <location>
        <position position="217"/>
    </location>
    <ligand>
        <name>S-adenosyl-L-methionine</name>
        <dbReference type="ChEBI" id="CHEBI:59789"/>
    </ligand>
</feature>
<feature type="binding site" evidence="1">
    <location>
        <position position="226"/>
    </location>
    <ligand>
        <name>S-adenosyl-L-methionine</name>
        <dbReference type="ChEBI" id="CHEBI:59789"/>
    </ligand>
</feature>
<proteinExistence type="inferred from homology"/>
<evidence type="ECO:0000255" key="1">
    <source>
        <dbReference type="HAMAP-Rule" id="MF_01887"/>
    </source>
</evidence>
<name>RLMB_VIBVU</name>
<comment type="function">
    <text evidence="1">Specifically methylates the ribose of guanosine 2251 in 23S rRNA.</text>
</comment>
<comment type="catalytic activity">
    <reaction evidence="1">
        <text>guanosine(2251) in 23S rRNA + S-adenosyl-L-methionine = 2'-O-methylguanosine(2251) in 23S rRNA + S-adenosyl-L-homocysteine + H(+)</text>
        <dbReference type="Rhea" id="RHEA:24140"/>
        <dbReference type="Rhea" id="RHEA-COMP:10239"/>
        <dbReference type="Rhea" id="RHEA-COMP:10241"/>
        <dbReference type="ChEBI" id="CHEBI:15378"/>
        <dbReference type="ChEBI" id="CHEBI:57856"/>
        <dbReference type="ChEBI" id="CHEBI:59789"/>
        <dbReference type="ChEBI" id="CHEBI:74269"/>
        <dbReference type="ChEBI" id="CHEBI:74445"/>
        <dbReference type="EC" id="2.1.1.185"/>
    </reaction>
</comment>
<comment type="subcellular location">
    <subcellularLocation>
        <location evidence="1">Cytoplasm</location>
    </subcellularLocation>
</comment>
<comment type="similarity">
    <text evidence="1">Belongs to the class IV-like SAM-binding methyltransferase superfamily. RNA methyltransferase TrmH family. RlmB subfamily.</text>
</comment>
<gene>
    <name evidence="1" type="primary">rlmB</name>
    <name type="ordered locus">VV1_1305</name>
</gene>
<reference key="1">
    <citation type="submission" date="2002-12" db="EMBL/GenBank/DDBJ databases">
        <title>Complete genome sequence of Vibrio vulnificus CMCP6.</title>
        <authorList>
            <person name="Rhee J.H."/>
            <person name="Kim S.Y."/>
            <person name="Chung S.S."/>
            <person name="Kim J.J."/>
            <person name="Moon Y.H."/>
            <person name="Jeong H."/>
            <person name="Choy H.E."/>
        </authorList>
    </citation>
    <scope>NUCLEOTIDE SEQUENCE [LARGE SCALE GENOMIC DNA]</scope>
    <source>
        <strain>CMCP6</strain>
    </source>
</reference>